<proteinExistence type="inferred from homology"/>
<sequence length="342" mass="36417">MTSDETLAVLIRYLDNPNPTVEEAVEVFTPMTIGEYDDVHIAALLATIRTRGETFADIAGAAKAFLNAGRPFPVPGTGVLDTAGTGGDGANTINITTGASLVAAAGGLKVVKHGNRSVSSKSGSADVLEALNIPLDLDPERAQRWFEASNFTFLFAPAYNPAIAHAQPVRKALKVPTIFNVLGPLLSPVRPEFQIMGVANPRHGQMLTEVFRELGRTRALVVHGAGTDEIAVHGTTQVWELKADGEIISYEITPEELGVERCDLTDLVGGDGVENARHMRAIFDGTGPAAHRNAVAVNAGAMFYLNSQADSLREGTAHALSLINDGTVADWLKTHEEIDYRG</sequence>
<organism>
    <name type="scientific">Corynebacterium efficiens (strain DSM 44549 / YS-314 / AJ 12310 / JCM 11189 / NBRC 100395)</name>
    <dbReference type="NCBI Taxonomy" id="196164"/>
    <lineage>
        <taxon>Bacteria</taxon>
        <taxon>Bacillati</taxon>
        <taxon>Actinomycetota</taxon>
        <taxon>Actinomycetes</taxon>
        <taxon>Mycobacteriales</taxon>
        <taxon>Corynebacteriaceae</taxon>
        <taxon>Corynebacterium</taxon>
    </lineage>
</organism>
<keyword id="KW-0028">Amino-acid biosynthesis</keyword>
<keyword id="KW-0057">Aromatic amino acid biosynthesis</keyword>
<keyword id="KW-0328">Glycosyltransferase</keyword>
<keyword id="KW-0460">Magnesium</keyword>
<keyword id="KW-0479">Metal-binding</keyword>
<keyword id="KW-1185">Reference proteome</keyword>
<keyword id="KW-0808">Transferase</keyword>
<keyword id="KW-0822">Tryptophan biosynthesis</keyword>
<evidence type="ECO:0000255" key="1">
    <source>
        <dbReference type="HAMAP-Rule" id="MF_00211"/>
    </source>
</evidence>
<feature type="chain" id="PRO_0000227150" description="Anthranilate phosphoribosyltransferase">
    <location>
        <begin position="1"/>
        <end position="342"/>
    </location>
</feature>
<feature type="binding site" evidence="1">
    <location>
        <position position="84"/>
    </location>
    <ligand>
        <name>5-phospho-alpha-D-ribose 1-diphosphate</name>
        <dbReference type="ChEBI" id="CHEBI:58017"/>
    </ligand>
</feature>
<feature type="binding site" evidence="1">
    <location>
        <position position="84"/>
    </location>
    <ligand>
        <name>anthranilate</name>
        <dbReference type="ChEBI" id="CHEBI:16567"/>
        <label>1</label>
    </ligand>
</feature>
<feature type="binding site" evidence="1">
    <location>
        <begin position="87"/>
        <end position="88"/>
    </location>
    <ligand>
        <name>5-phospho-alpha-D-ribose 1-diphosphate</name>
        <dbReference type="ChEBI" id="CHEBI:58017"/>
    </ligand>
</feature>
<feature type="binding site" evidence="1">
    <location>
        <position position="92"/>
    </location>
    <ligand>
        <name>5-phospho-alpha-D-ribose 1-diphosphate</name>
        <dbReference type="ChEBI" id="CHEBI:58017"/>
    </ligand>
</feature>
<feature type="binding site" evidence="1">
    <location>
        <begin position="94"/>
        <end position="97"/>
    </location>
    <ligand>
        <name>5-phospho-alpha-D-ribose 1-diphosphate</name>
        <dbReference type="ChEBI" id="CHEBI:58017"/>
    </ligand>
</feature>
<feature type="binding site" evidence="1">
    <location>
        <position position="96"/>
    </location>
    <ligand>
        <name>Mg(2+)</name>
        <dbReference type="ChEBI" id="CHEBI:18420"/>
        <label>1</label>
    </ligand>
</feature>
<feature type="binding site" evidence="1">
    <location>
        <begin position="112"/>
        <end position="120"/>
    </location>
    <ligand>
        <name>5-phospho-alpha-D-ribose 1-diphosphate</name>
        <dbReference type="ChEBI" id="CHEBI:58017"/>
    </ligand>
</feature>
<feature type="binding site" evidence="1">
    <location>
        <position position="115"/>
    </location>
    <ligand>
        <name>anthranilate</name>
        <dbReference type="ChEBI" id="CHEBI:16567"/>
        <label>1</label>
    </ligand>
</feature>
<feature type="binding site" evidence="1">
    <location>
        <position position="124"/>
    </location>
    <ligand>
        <name>5-phospho-alpha-D-ribose 1-diphosphate</name>
        <dbReference type="ChEBI" id="CHEBI:58017"/>
    </ligand>
</feature>
<feature type="binding site" evidence="1">
    <location>
        <position position="170"/>
    </location>
    <ligand>
        <name>anthranilate</name>
        <dbReference type="ChEBI" id="CHEBI:16567"/>
        <label>2</label>
    </ligand>
</feature>
<feature type="binding site" evidence="1">
    <location>
        <position position="228"/>
    </location>
    <ligand>
        <name>Mg(2+)</name>
        <dbReference type="ChEBI" id="CHEBI:18420"/>
        <label>2</label>
    </ligand>
</feature>
<feature type="binding site" evidence="1">
    <location>
        <position position="229"/>
    </location>
    <ligand>
        <name>Mg(2+)</name>
        <dbReference type="ChEBI" id="CHEBI:18420"/>
        <label>1</label>
    </ligand>
</feature>
<feature type="binding site" evidence="1">
    <location>
        <position position="229"/>
    </location>
    <ligand>
        <name>Mg(2+)</name>
        <dbReference type="ChEBI" id="CHEBI:18420"/>
        <label>2</label>
    </ligand>
</feature>
<dbReference type="EC" id="2.4.2.18" evidence="1"/>
<dbReference type="EMBL" id="BA000035">
    <property type="protein sequence ID" value="BAC19680.1"/>
    <property type="molecule type" value="Genomic_DNA"/>
</dbReference>
<dbReference type="RefSeq" id="WP_006768773.1">
    <property type="nucleotide sequence ID" value="NC_004369.1"/>
</dbReference>
<dbReference type="SMR" id="Q8FLJ8"/>
<dbReference type="STRING" id="196164.gene:10743320"/>
<dbReference type="KEGG" id="cef:CE2870"/>
<dbReference type="eggNOG" id="COG0547">
    <property type="taxonomic scope" value="Bacteria"/>
</dbReference>
<dbReference type="HOGENOM" id="CLU_034315_2_1_11"/>
<dbReference type="OrthoDB" id="9806430at2"/>
<dbReference type="UniPathway" id="UPA00035">
    <property type="reaction ID" value="UER00041"/>
</dbReference>
<dbReference type="Proteomes" id="UP000001409">
    <property type="component" value="Chromosome"/>
</dbReference>
<dbReference type="GO" id="GO:0005829">
    <property type="term" value="C:cytosol"/>
    <property type="evidence" value="ECO:0007669"/>
    <property type="project" value="TreeGrafter"/>
</dbReference>
<dbReference type="GO" id="GO:0004048">
    <property type="term" value="F:anthranilate phosphoribosyltransferase activity"/>
    <property type="evidence" value="ECO:0007669"/>
    <property type="project" value="UniProtKB-UniRule"/>
</dbReference>
<dbReference type="GO" id="GO:0000287">
    <property type="term" value="F:magnesium ion binding"/>
    <property type="evidence" value="ECO:0007669"/>
    <property type="project" value="UniProtKB-UniRule"/>
</dbReference>
<dbReference type="GO" id="GO:0000162">
    <property type="term" value="P:L-tryptophan biosynthetic process"/>
    <property type="evidence" value="ECO:0007669"/>
    <property type="project" value="UniProtKB-UniRule"/>
</dbReference>
<dbReference type="FunFam" id="3.40.1030.10:FF:000002">
    <property type="entry name" value="Anthranilate phosphoribosyltransferase"/>
    <property type="match status" value="1"/>
</dbReference>
<dbReference type="Gene3D" id="3.40.1030.10">
    <property type="entry name" value="Nucleoside phosphorylase/phosphoribosyltransferase catalytic domain"/>
    <property type="match status" value="1"/>
</dbReference>
<dbReference type="Gene3D" id="1.20.970.10">
    <property type="entry name" value="Transferase, Pyrimidine Nucleoside Phosphorylase, Chain C"/>
    <property type="match status" value="1"/>
</dbReference>
<dbReference type="HAMAP" id="MF_00211">
    <property type="entry name" value="TrpD"/>
    <property type="match status" value="1"/>
</dbReference>
<dbReference type="InterPro" id="IPR005940">
    <property type="entry name" value="Anthranilate_Pribosyl_Tfrase"/>
</dbReference>
<dbReference type="InterPro" id="IPR000312">
    <property type="entry name" value="Glycosyl_Trfase_fam3"/>
</dbReference>
<dbReference type="InterPro" id="IPR017459">
    <property type="entry name" value="Glycosyl_Trfase_fam3_N_dom"/>
</dbReference>
<dbReference type="InterPro" id="IPR036320">
    <property type="entry name" value="Glycosyl_Trfase_fam3_N_dom_sf"/>
</dbReference>
<dbReference type="InterPro" id="IPR035902">
    <property type="entry name" value="Nuc_phospho_transferase"/>
</dbReference>
<dbReference type="NCBIfam" id="TIGR01245">
    <property type="entry name" value="trpD"/>
    <property type="match status" value="1"/>
</dbReference>
<dbReference type="PANTHER" id="PTHR43285">
    <property type="entry name" value="ANTHRANILATE PHOSPHORIBOSYLTRANSFERASE"/>
    <property type="match status" value="1"/>
</dbReference>
<dbReference type="PANTHER" id="PTHR43285:SF2">
    <property type="entry name" value="ANTHRANILATE PHOSPHORIBOSYLTRANSFERASE"/>
    <property type="match status" value="1"/>
</dbReference>
<dbReference type="Pfam" id="PF02885">
    <property type="entry name" value="Glycos_trans_3N"/>
    <property type="match status" value="1"/>
</dbReference>
<dbReference type="Pfam" id="PF00591">
    <property type="entry name" value="Glycos_transf_3"/>
    <property type="match status" value="1"/>
</dbReference>
<dbReference type="SUPFAM" id="SSF52418">
    <property type="entry name" value="Nucleoside phosphorylase/phosphoribosyltransferase catalytic domain"/>
    <property type="match status" value="1"/>
</dbReference>
<dbReference type="SUPFAM" id="SSF47648">
    <property type="entry name" value="Nucleoside phosphorylase/phosphoribosyltransferase N-terminal domain"/>
    <property type="match status" value="1"/>
</dbReference>
<name>TRPD_COREF</name>
<comment type="function">
    <text evidence="1">Catalyzes the transfer of the phosphoribosyl group of 5-phosphorylribose-1-pyrophosphate (PRPP) to anthranilate to yield N-(5'-phosphoribosyl)-anthranilate (PRA).</text>
</comment>
<comment type="catalytic activity">
    <reaction evidence="1">
        <text>N-(5-phospho-beta-D-ribosyl)anthranilate + diphosphate = 5-phospho-alpha-D-ribose 1-diphosphate + anthranilate</text>
        <dbReference type="Rhea" id="RHEA:11768"/>
        <dbReference type="ChEBI" id="CHEBI:16567"/>
        <dbReference type="ChEBI" id="CHEBI:18277"/>
        <dbReference type="ChEBI" id="CHEBI:33019"/>
        <dbReference type="ChEBI" id="CHEBI:58017"/>
        <dbReference type="EC" id="2.4.2.18"/>
    </reaction>
</comment>
<comment type="cofactor">
    <cofactor evidence="1">
        <name>Mg(2+)</name>
        <dbReference type="ChEBI" id="CHEBI:18420"/>
    </cofactor>
    <text evidence="1">Binds 2 magnesium ions per monomer.</text>
</comment>
<comment type="pathway">
    <text evidence="1">Amino-acid biosynthesis; L-tryptophan biosynthesis; L-tryptophan from chorismate: step 2/5.</text>
</comment>
<comment type="subunit">
    <text evidence="1">Homodimer.</text>
</comment>
<comment type="similarity">
    <text evidence="1">Belongs to the anthranilate phosphoribosyltransferase family.</text>
</comment>
<protein>
    <recommendedName>
        <fullName evidence="1">Anthranilate phosphoribosyltransferase</fullName>
        <ecNumber evidence="1">2.4.2.18</ecNumber>
    </recommendedName>
</protein>
<reference key="1">
    <citation type="journal article" date="2003" name="Genome Res.">
        <title>Comparative complete genome sequence analysis of the amino acid replacements responsible for the thermostability of Corynebacterium efficiens.</title>
        <authorList>
            <person name="Nishio Y."/>
            <person name="Nakamura Y."/>
            <person name="Kawarabayasi Y."/>
            <person name="Usuda Y."/>
            <person name="Kimura E."/>
            <person name="Sugimoto S."/>
            <person name="Matsui K."/>
            <person name="Yamagishi A."/>
            <person name="Kikuchi H."/>
            <person name="Ikeo K."/>
            <person name="Gojobori T."/>
        </authorList>
    </citation>
    <scope>NUCLEOTIDE SEQUENCE [LARGE SCALE GENOMIC DNA]</scope>
    <source>
        <strain>DSM 44549 / YS-314 / AJ 12310 / JCM 11189 / NBRC 100395</strain>
    </source>
</reference>
<accession>Q8FLJ8</accession>
<gene>
    <name evidence="1" type="primary">trpD</name>
    <name type="ordered locus">CE2870</name>
</gene>